<proteinExistence type="evidence at protein level"/>
<evidence type="ECO:0000255" key="1">
    <source>
        <dbReference type="HAMAP-Rule" id="MF_01554"/>
    </source>
</evidence>
<evidence type="ECO:0000269" key="2">
    <source>
    </source>
</evidence>
<evidence type="ECO:0000269" key="3">
    <source>
    </source>
</evidence>
<evidence type="ECO:0000305" key="4"/>
<evidence type="ECO:0000305" key="5">
    <source>
    </source>
</evidence>
<evidence type="ECO:0007829" key="6">
    <source>
        <dbReference type="PDB" id="7OJR"/>
    </source>
</evidence>
<evidence type="ECO:0007829" key="7">
    <source>
        <dbReference type="PDB" id="7OML"/>
    </source>
</evidence>
<sequence>MGKYFGTDGVRGVANSELTPELAFKVGRFGGYVLTKDKQRPKVLIGRDTRISGHMLEGALVAGLLSIGAEVMRLGVISTPGVSYLTKAMDAEAGVMISASHNPVQDNGIKFFGGDGFKLSDEQEAEIERLMDEPEDKLPRPVGADLGLVNDYFEGGQKYLQFLKQTADEDFTGIHVALDCANGATSSLATHLFADLDADVSTMGTSPNGLNINDGVGSTHPEALSAFVKEKNADLGLAFDGDGDRLIAVDEKGNIVDGDQIMYICSKHLKSEGRLKDDTVVSTVMSNLGFYKALEKEGIKSVQTAVGDRYVVEAMKKDGYNVGGEQSGHLIFLDYNTTGDGLLSAIMLMNTLKATGKPLSELAAEMQKFPQLLVNVRVTDKYKVEENEKVKAVISEVEKEMNGDGRILVRPSGTEPLVRVMAEAKTKELCDEYVNRIVEVVRSEMGLE</sequence>
<reference key="1">
    <citation type="submission" date="1997-07" db="EMBL/GenBank/DDBJ databases">
        <title>Sequence analysis of the 70kb region between 17 and 23 degree of the Bacillus subtilis chromosome.</title>
        <authorList>
            <person name="Haga K."/>
            <person name="Liu H."/>
            <person name="Yasumoto K."/>
            <person name="Takahashi H."/>
            <person name="Yoshikawa H."/>
        </authorList>
    </citation>
    <scope>NUCLEOTIDE SEQUENCE [GENOMIC DNA]</scope>
    <source>
        <strain>168</strain>
    </source>
</reference>
<reference key="2">
    <citation type="journal article" date="1997" name="Nature">
        <title>The complete genome sequence of the Gram-positive bacterium Bacillus subtilis.</title>
        <authorList>
            <person name="Kunst F."/>
            <person name="Ogasawara N."/>
            <person name="Moszer I."/>
            <person name="Albertini A.M."/>
            <person name="Alloni G."/>
            <person name="Azevedo V."/>
            <person name="Bertero M.G."/>
            <person name="Bessieres P."/>
            <person name="Bolotin A."/>
            <person name="Borchert S."/>
            <person name="Borriss R."/>
            <person name="Boursier L."/>
            <person name="Brans A."/>
            <person name="Braun M."/>
            <person name="Brignell S.C."/>
            <person name="Bron S."/>
            <person name="Brouillet S."/>
            <person name="Bruschi C.V."/>
            <person name="Caldwell B."/>
            <person name="Capuano V."/>
            <person name="Carter N.M."/>
            <person name="Choi S.-K."/>
            <person name="Codani J.-J."/>
            <person name="Connerton I.F."/>
            <person name="Cummings N.J."/>
            <person name="Daniel R.A."/>
            <person name="Denizot F."/>
            <person name="Devine K.M."/>
            <person name="Duesterhoeft A."/>
            <person name="Ehrlich S.D."/>
            <person name="Emmerson P.T."/>
            <person name="Entian K.-D."/>
            <person name="Errington J."/>
            <person name="Fabret C."/>
            <person name="Ferrari E."/>
            <person name="Foulger D."/>
            <person name="Fritz C."/>
            <person name="Fujita M."/>
            <person name="Fujita Y."/>
            <person name="Fuma S."/>
            <person name="Galizzi A."/>
            <person name="Galleron N."/>
            <person name="Ghim S.-Y."/>
            <person name="Glaser P."/>
            <person name="Goffeau A."/>
            <person name="Golightly E.J."/>
            <person name="Grandi G."/>
            <person name="Guiseppi G."/>
            <person name="Guy B.J."/>
            <person name="Haga K."/>
            <person name="Haiech J."/>
            <person name="Harwood C.R."/>
            <person name="Henaut A."/>
            <person name="Hilbert H."/>
            <person name="Holsappel S."/>
            <person name="Hosono S."/>
            <person name="Hullo M.-F."/>
            <person name="Itaya M."/>
            <person name="Jones L.-M."/>
            <person name="Joris B."/>
            <person name="Karamata D."/>
            <person name="Kasahara Y."/>
            <person name="Klaerr-Blanchard M."/>
            <person name="Klein C."/>
            <person name="Kobayashi Y."/>
            <person name="Koetter P."/>
            <person name="Koningstein G."/>
            <person name="Krogh S."/>
            <person name="Kumano M."/>
            <person name="Kurita K."/>
            <person name="Lapidus A."/>
            <person name="Lardinois S."/>
            <person name="Lauber J."/>
            <person name="Lazarevic V."/>
            <person name="Lee S.-M."/>
            <person name="Levine A."/>
            <person name="Liu H."/>
            <person name="Masuda S."/>
            <person name="Mauel C."/>
            <person name="Medigue C."/>
            <person name="Medina N."/>
            <person name="Mellado R.P."/>
            <person name="Mizuno M."/>
            <person name="Moestl D."/>
            <person name="Nakai S."/>
            <person name="Noback M."/>
            <person name="Noone D."/>
            <person name="O'Reilly M."/>
            <person name="Ogawa K."/>
            <person name="Ogiwara A."/>
            <person name="Oudega B."/>
            <person name="Park S.-H."/>
            <person name="Parro V."/>
            <person name="Pohl T.M."/>
            <person name="Portetelle D."/>
            <person name="Porwollik S."/>
            <person name="Prescott A.M."/>
            <person name="Presecan E."/>
            <person name="Pujic P."/>
            <person name="Purnelle B."/>
            <person name="Rapoport G."/>
            <person name="Rey M."/>
            <person name="Reynolds S."/>
            <person name="Rieger M."/>
            <person name="Rivolta C."/>
            <person name="Rocha E."/>
            <person name="Roche B."/>
            <person name="Rose M."/>
            <person name="Sadaie Y."/>
            <person name="Sato T."/>
            <person name="Scanlan E."/>
            <person name="Schleich S."/>
            <person name="Schroeter R."/>
            <person name="Scoffone F."/>
            <person name="Sekiguchi J."/>
            <person name="Sekowska A."/>
            <person name="Seror S.J."/>
            <person name="Serror P."/>
            <person name="Shin B.-S."/>
            <person name="Soldo B."/>
            <person name="Sorokin A."/>
            <person name="Tacconi E."/>
            <person name="Takagi T."/>
            <person name="Takahashi H."/>
            <person name="Takemaru K."/>
            <person name="Takeuchi M."/>
            <person name="Tamakoshi A."/>
            <person name="Tanaka T."/>
            <person name="Terpstra P."/>
            <person name="Tognoni A."/>
            <person name="Tosato V."/>
            <person name="Uchiyama S."/>
            <person name="Vandenbol M."/>
            <person name="Vannier F."/>
            <person name="Vassarotti A."/>
            <person name="Viari A."/>
            <person name="Wambutt R."/>
            <person name="Wedler E."/>
            <person name="Wedler H."/>
            <person name="Weitzenegger T."/>
            <person name="Winters P."/>
            <person name="Wipat A."/>
            <person name="Yamamoto H."/>
            <person name="Yamane K."/>
            <person name="Yasumoto K."/>
            <person name="Yata K."/>
            <person name="Yoshida K."/>
            <person name="Yoshikawa H.-F."/>
            <person name="Zumstein E."/>
            <person name="Yoshikawa H."/>
            <person name="Danchin A."/>
        </authorList>
    </citation>
    <scope>NUCLEOTIDE SEQUENCE [LARGE SCALE GENOMIC DNA]</scope>
    <source>
        <strain>168</strain>
    </source>
</reference>
<reference key="3">
    <citation type="journal article" date="2007" name="Mol. Cell. Proteomics">
        <title>The serine/threonine/tyrosine phosphoproteome of the model bacterium Bacillus subtilis.</title>
        <authorList>
            <person name="Macek B."/>
            <person name="Mijakovic I."/>
            <person name="Olsen J.V."/>
            <person name="Gnad F."/>
            <person name="Kumar C."/>
            <person name="Jensen P.R."/>
            <person name="Mann M."/>
        </authorList>
    </citation>
    <scope>PHOSPHORYLATION [LARGE SCALE ANALYSIS] AT SER-100</scope>
    <scope>IDENTIFICATION BY MASS SPECTROMETRY</scope>
    <source>
        <strain>168</strain>
    </source>
</reference>
<reference key="4">
    <citation type="journal article" date="2013" name="J. Biol. Chem.">
        <title>Cyclic di-AMP homeostasis in Bacillus subtilis: both lack and high level accumulation of the nucleotide are detrimental for cell growth.</title>
        <authorList>
            <person name="Mehne F.M."/>
            <person name="Gunka K."/>
            <person name="Eilers H."/>
            <person name="Herzberg C."/>
            <person name="Kaever V."/>
            <person name="Stuelke J."/>
        </authorList>
    </citation>
    <scope>INDUCTION</scope>
</reference>
<reference key="5">
    <citation type="journal article" date="2015" name="J. Bacteriol.">
        <title>An essential poison: synthesis and degradation of cyclic di-AMP in Bacillus subtilis.</title>
        <authorList>
            <person name="Gundlach J."/>
            <person name="Mehne F.M."/>
            <person name="Herzberg C."/>
            <person name="Kampf J."/>
            <person name="Valerius O."/>
            <person name="Kaever V."/>
            <person name="Stuelke J."/>
        </authorList>
    </citation>
    <scope>SUBUNIT</scope>
    <scope>INTERACTION WITH CDAS</scope>
    <source>
        <strain>168</strain>
    </source>
</reference>
<keyword id="KW-0002">3D-structure</keyword>
<keyword id="KW-0413">Isomerase</keyword>
<keyword id="KW-0460">Magnesium</keyword>
<keyword id="KW-0479">Metal-binding</keyword>
<keyword id="KW-0597">Phosphoprotein</keyword>
<keyword id="KW-1185">Reference proteome</keyword>
<name>GLMM_BACSU</name>
<feature type="chain" id="PRO_0000147846" description="Phosphoglucosamine mutase">
    <location>
        <begin position="1"/>
        <end position="448"/>
    </location>
</feature>
<feature type="active site" description="Phosphoserine intermediate">
    <location>
        <position position="100"/>
    </location>
</feature>
<feature type="binding site" description="via phosphate group" evidence="1">
    <location>
        <position position="100"/>
    </location>
    <ligand>
        <name>Mg(2+)</name>
        <dbReference type="ChEBI" id="CHEBI:18420"/>
    </ligand>
</feature>
<feature type="binding site" evidence="1">
    <location>
        <position position="240"/>
    </location>
    <ligand>
        <name>Mg(2+)</name>
        <dbReference type="ChEBI" id="CHEBI:18420"/>
    </ligand>
</feature>
<feature type="binding site" evidence="1">
    <location>
        <position position="242"/>
    </location>
    <ligand>
        <name>Mg(2+)</name>
        <dbReference type="ChEBI" id="CHEBI:18420"/>
    </ligand>
</feature>
<feature type="binding site" evidence="1">
    <location>
        <position position="244"/>
    </location>
    <ligand>
        <name>Mg(2+)</name>
        <dbReference type="ChEBI" id="CHEBI:18420"/>
    </ligand>
</feature>
<feature type="modified residue" description="Phosphoserine" evidence="1">
    <location>
        <position position="100"/>
    </location>
</feature>
<feature type="sequence conflict" description="In Ref. 1; BAA33070." evidence="4" ref="1">
    <original>T</original>
    <variation>K</variation>
    <location>
        <position position="7"/>
    </location>
</feature>
<feature type="strand" evidence="7">
    <location>
        <begin position="9"/>
        <end position="14"/>
    </location>
</feature>
<feature type="turn" evidence="7">
    <location>
        <begin position="15"/>
        <end position="17"/>
    </location>
</feature>
<feature type="helix" evidence="7">
    <location>
        <begin position="20"/>
        <end position="33"/>
    </location>
</feature>
<feature type="helix" evidence="7">
    <location>
        <begin position="34"/>
        <end position="36"/>
    </location>
</feature>
<feature type="strand" evidence="7">
    <location>
        <begin position="42"/>
        <end position="47"/>
    </location>
</feature>
<feature type="helix" evidence="7">
    <location>
        <begin position="52"/>
        <end position="65"/>
    </location>
</feature>
<feature type="turn" evidence="7">
    <location>
        <begin position="66"/>
        <end position="68"/>
    </location>
</feature>
<feature type="strand" evidence="7">
    <location>
        <begin position="70"/>
        <end position="76"/>
    </location>
</feature>
<feature type="helix" evidence="7">
    <location>
        <begin position="79"/>
        <end position="88"/>
    </location>
</feature>
<feature type="strand" evidence="7">
    <location>
        <begin position="92"/>
        <end position="97"/>
    </location>
</feature>
<feature type="strand" evidence="7">
    <location>
        <begin position="106"/>
        <end position="113"/>
    </location>
</feature>
<feature type="strand" evidence="7">
    <location>
        <begin position="116"/>
        <end position="118"/>
    </location>
</feature>
<feature type="helix" evidence="7">
    <location>
        <begin position="121"/>
        <end position="130"/>
    </location>
</feature>
<feature type="strand" evidence="7">
    <location>
        <begin position="133"/>
        <end position="135"/>
    </location>
</feature>
<feature type="helix" evidence="7">
    <location>
        <begin position="143"/>
        <end position="145"/>
    </location>
</feature>
<feature type="helix" evidence="7">
    <location>
        <begin position="155"/>
        <end position="165"/>
    </location>
</feature>
<feature type="strand" evidence="6">
    <location>
        <begin position="167"/>
        <end position="169"/>
    </location>
</feature>
<feature type="strand" evidence="7">
    <location>
        <begin position="175"/>
        <end position="179"/>
    </location>
</feature>
<feature type="helix" evidence="7">
    <location>
        <begin position="186"/>
        <end position="195"/>
    </location>
</feature>
<feature type="strand" evidence="7">
    <location>
        <begin position="199"/>
        <end position="204"/>
    </location>
</feature>
<feature type="helix" evidence="7">
    <location>
        <begin position="222"/>
        <end position="231"/>
    </location>
</feature>
<feature type="strand" evidence="7">
    <location>
        <begin position="234"/>
        <end position="239"/>
    </location>
</feature>
<feature type="strand" evidence="7">
    <location>
        <begin position="245"/>
        <end position="249"/>
    </location>
</feature>
<feature type="helix" evidence="7">
    <location>
        <begin position="258"/>
        <end position="271"/>
    </location>
</feature>
<feature type="helix" evidence="7">
    <location>
        <begin position="276"/>
        <end position="278"/>
    </location>
</feature>
<feature type="strand" evidence="7">
    <location>
        <begin position="279"/>
        <end position="283"/>
    </location>
</feature>
<feature type="helix" evidence="7">
    <location>
        <begin position="288"/>
        <end position="296"/>
    </location>
</feature>
<feature type="strand" evidence="7">
    <location>
        <begin position="300"/>
        <end position="304"/>
    </location>
</feature>
<feature type="helix" evidence="7">
    <location>
        <begin position="308"/>
        <end position="317"/>
    </location>
</feature>
<feature type="strand" evidence="7">
    <location>
        <begin position="321"/>
        <end position="324"/>
    </location>
</feature>
<feature type="strand" evidence="7">
    <location>
        <begin position="328"/>
        <end position="332"/>
    </location>
</feature>
<feature type="turn" evidence="7">
    <location>
        <begin position="333"/>
        <end position="335"/>
    </location>
</feature>
<feature type="helix" evidence="7">
    <location>
        <begin position="341"/>
        <end position="355"/>
    </location>
</feature>
<feature type="helix" evidence="7">
    <location>
        <begin position="359"/>
        <end position="364"/>
    </location>
</feature>
<feature type="strand" evidence="7">
    <location>
        <begin position="371"/>
        <end position="377"/>
    </location>
</feature>
<feature type="turn" evidence="6">
    <location>
        <begin position="381"/>
        <end position="384"/>
    </location>
</feature>
<feature type="helix" evidence="7">
    <location>
        <begin position="390"/>
        <end position="401"/>
    </location>
</feature>
<feature type="strand" evidence="7">
    <location>
        <begin position="406"/>
        <end position="411"/>
    </location>
</feature>
<feature type="strand" evidence="7">
    <location>
        <begin position="413"/>
        <end position="423"/>
    </location>
</feature>
<feature type="helix" evidence="7">
    <location>
        <begin position="427"/>
        <end position="444"/>
    </location>
</feature>
<protein>
    <recommendedName>
        <fullName evidence="1">Phosphoglucosamine mutase</fullName>
        <ecNumber evidence="1">5.4.2.10</ecNumber>
    </recommendedName>
</protein>
<comment type="function">
    <text evidence="1 5">Catalyzes the conversion of glucosamine-6-phosphate to glucosamine-1-phosphate (By similarity). Glucosamine-1-phosphate is used for cell wall biosynthesis (Probable).</text>
</comment>
<comment type="catalytic activity">
    <reaction evidence="1">
        <text>alpha-D-glucosamine 1-phosphate = D-glucosamine 6-phosphate</text>
        <dbReference type="Rhea" id="RHEA:23424"/>
        <dbReference type="ChEBI" id="CHEBI:58516"/>
        <dbReference type="ChEBI" id="CHEBI:58725"/>
        <dbReference type="EC" id="5.4.2.10"/>
    </reaction>
</comment>
<comment type="cofactor">
    <cofactor evidence="1">
        <name>Mg(2+)</name>
        <dbReference type="ChEBI" id="CHEBI:18420"/>
    </cofactor>
    <text evidence="1">Binds 1 Mg(2+) ion per subunit.</text>
</comment>
<comment type="subunit">
    <text evidence="3">Homodimer, may form a complex with CdaA.</text>
</comment>
<comment type="induction">
    <text evidence="2">Constitutively expressed, part of the cdaA-cdaR-glmM-glmS operon (PubMed:23192352).</text>
</comment>
<comment type="PTM">
    <text evidence="1">Activated by phosphorylation.</text>
</comment>
<comment type="similarity">
    <text evidence="1">Belongs to the phosphohexose mutase family.</text>
</comment>
<organism>
    <name type="scientific">Bacillus subtilis (strain 168)</name>
    <dbReference type="NCBI Taxonomy" id="224308"/>
    <lineage>
        <taxon>Bacteria</taxon>
        <taxon>Bacillati</taxon>
        <taxon>Bacillota</taxon>
        <taxon>Bacilli</taxon>
        <taxon>Bacillales</taxon>
        <taxon>Bacillaceae</taxon>
        <taxon>Bacillus</taxon>
    </lineage>
</organism>
<dbReference type="EC" id="5.4.2.10" evidence="1"/>
<dbReference type="EMBL" id="AB006424">
    <property type="protein sequence ID" value="BAA33070.1"/>
    <property type="molecule type" value="Genomic_DNA"/>
</dbReference>
<dbReference type="EMBL" id="AL009126">
    <property type="protein sequence ID" value="CAB11953.1"/>
    <property type="molecule type" value="Genomic_DNA"/>
</dbReference>
<dbReference type="PIR" id="B69745">
    <property type="entry name" value="B69745"/>
</dbReference>
<dbReference type="RefSeq" id="NP_388058.1">
    <property type="nucleotide sequence ID" value="NC_000964.3"/>
</dbReference>
<dbReference type="RefSeq" id="WP_003234946.1">
    <property type="nucleotide sequence ID" value="NZ_OZ025638.1"/>
</dbReference>
<dbReference type="PDB" id="7OJR">
    <property type="method" value="X-ray"/>
    <property type="resolution" value="3.05 A"/>
    <property type="chains" value="A=1-448"/>
</dbReference>
<dbReference type="PDB" id="7OJS">
    <property type="method" value="X-ray"/>
    <property type="resolution" value="4.20 A"/>
    <property type="chains" value="A/B/C/F/G/J=1-369"/>
</dbReference>
<dbReference type="PDB" id="7OLH">
    <property type="method" value="X-ray"/>
    <property type="resolution" value="3.65 A"/>
    <property type="chains" value="A/B/C/D/E/F=1-448"/>
</dbReference>
<dbReference type="PDB" id="7OML">
    <property type="method" value="X-ray"/>
    <property type="resolution" value="2.90 A"/>
    <property type="chains" value="A=1-448"/>
</dbReference>
<dbReference type="PDBsum" id="7OJR"/>
<dbReference type="PDBsum" id="7OJS"/>
<dbReference type="PDBsum" id="7OLH"/>
<dbReference type="PDBsum" id="7OML"/>
<dbReference type="SASBDB" id="O34824"/>
<dbReference type="SMR" id="O34824"/>
<dbReference type="FunCoup" id="O34824">
    <property type="interactions" value="718"/>
</dbReference>
<dbReference type="IntAct" id="O34824">
    <property type="interactions" value="1"/>
</dbReference>
<dbReference type="MINT" id="O34824"/>
<dbReference type="STRING" id="224308.BSU01770"/>
<dbReference type="jPOST" id="O34824"/>
<dbReference type="PaxDb" id="224308-BSU01770"/>
<dbReference type="DNASU" id="938632"/>
<dbReference type="EnsemblBacteria" id="CAB11953">
    <property type="protein sequence ID" value="CAB11953"/>
    <property type="gene ID" value="BSU_01770"/>
</dbReference>
<dbReference type="GeneID" id="938632"/>
<dbReference type="KEGG" id="bsu:BSU01770"/>
<dbReference type="PATRIC" id="fig|224308.179.peg.183"/>
<dbReference type="eggNOG" id="COG1109">
    <property type="taxonomic scope" value="Bacteria"/>
</dbReference>
<dbReference type="InParanoid" id="O34824"/>
<dbReference type="OrthoDB" id="9806956at2"/>
<dbReference type="PhylomeDB" id="O34824"/>
<dbReference type="BioCyc" id="BSUB:BSU01770-MONOMER"/>
<dbReference type="Proteomes" id="UP000001570">
    <property type="component" value="Chromosome"/>
</dbReference>
<dbReference type="GO" id="GO:0005829">
    <property type="term" value="C:cytosol"/>
    <property type="evidence" value="ECO:0000318"/>
    <property type="project" value="GO_Central"/>
</dbReference>
<dbReference type="GO" id="GO:0000287">
    <property type="term" value="F:magnesium ion binding"/>
    <property type="evidence" value="ECO:0007669"/>
    <property type="project" value="UniProtKB-UniRule"/>
</dbReference>
<dbReference type="GO" id="GO:0008966">
    <property type="term" value="F:phosphoglucosamine mutase activity"/>
    <property type="evidence" value="ECO:0000318"/>
    <property type="project" value="GO_Central"/>
</dbReference>
<dbReference type="GO" id="GO:0004615">
    <property type="term" value="F:phosphomannomutase activity"/>
    <property type="evidence" value="ECO:0000318"/>
    <property type="project" value="GO_Central"/>
</dbReference>
<dbReference type="GO" id="GO:0005975">
    <property type="term" value="P:carbohydrate metabolic process"/>
    <property type="evidence" value="ECO:0007669"/>
    <property type="project" value="InterPro"/>
</dbReference>
<dbReference type="GO" id="GO:0009252">
    <property type="term" value="P:peptidoglycan biosynthetic process"/>
    <property type="evidence" value="ECO:0000318"/>
    <property type="project" value="GO_Central"/>
</dbReference>
<dbReference type="GO" id="GO:0006048">
    <property type="term" value="P:UDP-N-acetylglucosamine biosynthetic process"/>
    <property type="evidence" value="ECO:0000318"/>
    <property type="project" value="GO_Central"/>
</dbReference>
<dbReference type="CDD" id="cd05802">
    <property type="entry name" value="GlmM"/>
    <property type="match status" value="1"/>
</dbReference>
<dbReference type="FunFam" id="3.30.310.50:FF:000001">
    <property type="entry name" value="Phosphoglucosamine mutase"/>
    <property type="match status" value="1"/>
</dbReference>
<dbReference type="FunFam" id="3.40.120.10:FF:000001">
    <property type="entry name" value="Phosphoglucosamine mutase"/>
    <property type="match status" value="1"/>
</dbReference>
<dbReference type="FunFam" id="3.40.120.10:FF:000002">
    <property type="entry name" value="Phosphoglucosamine mutase"/>
    <property type="match status" value="1"/>
</dbReference>
<dbReference type="Gene3D" id="3.40.120.10">
    <property type="entry name" value="Alpha-D-Glucose-1,6-Bisphosphate, subunit A, domain 3"/>
    <property type="match status" value="3"/>
</dbReference>
<dbReference type="Gene3D" id="3.30.310.50">
    <property type="entry name" value="Alpha-D-phosphohexomutase, C-terminal domain"/>
    <property type="match status" value="1"/>
</dbReference>
<dbReference type="HAMAP" id="MF_01554_B">
    <property type="entry name" value="GlmM_B"/>
    <property type="match status" value="1"/>
</dbReference>
<dbReference type="InterPro" id="IPR005844">
    <property type="entry name" value="A-D-PHexomutase_a/b/a-I"/>
</dbReference>
<dbReference type="InterPro" id="IPR016055">
    <property type="entry name" value="A-D-PHexomutase_a/b/a-I/II/III"/>
</dbReference>
<dbReference type="InterPro" id="IPR005845">
    <property type="entry name" value="A-D-PHexomutase_a/b/a-II"/>
</dbReference>
<dbReference type="InterPro" id="IPR005846">
    <property type="entry name" value="A-D-PHexomutase_a/b/a-III"/>
</dbReference>
<dbReference type="InterPro" id="IPR005843">
    <property type="entry name" value="A-D-PHexomutase_C"/>
</dbReference>
<dbReference type="InterPro" id="IPR036900">
    <property type="entry name" value="A-D-PHexomutase_C_sf"/>
</dbReference>
<dbReference type="InterPro" id="IPR016066">
    <property type="entry name" value="A-D-PHexomutase_CS"/>
</dbReference>
<dbReference type="InterPro" id="IPR005841">
    <property type="entry name" value="Alpha-D-phosphohexomutase_SF"/>
</dbReference>
<dbReference type="InterPro" id="IPR006352">
    <property type="entry name" value="GlmM_bact"/>
</dbReference>
<dbReference type="InterPro" id="IPR050060">
    <property type="entry name" value="Phosphoglucosamine_mutase"/>
</dbReference>
<dbReference type="NCBIfam" id="TIGR01455">
    <property type="entry name" value="glmM"/>
    <property type="match status" value="1"/>
</dbReference>
<dbReference type="NCBIfam" id="NF008139">
    <property type="entry name" value="PRK10887.1"/>
    <property type="match status" value="1"/>
</dbReference>
<dbReference type="PANTHER" id="PTHR42946:SF1">
    <property type="entry name" value="PHOSPHOGLUCOMUTASE (ALPHA-D-GLUCOSE-1,6-BISPHOSPHATE-DEPENDENT)"/>
    <property type="match status" value="1"/>
</dbReference>
<dbReference type="PANTHER" id="PTHR42946">
    <property type="entry name" value="PHOSPHOHEXOSE MUTASE"/>
    <property type="match status" value="1"/>
</dbReference>
<dbReference type="Pfam" id="PF02878">
    <property type="entry name" value="PGM_PMM_I"/>
    <property type="match status" value="1"/>
</dbReference>
<dbReference type="Pfam" id="PF02879">
    <property type="entry name" value="PGM_PMM_II"/>
    <property type="match status" value="1"/>
</dbReference>
<dbReference type="Pfam" id="PF02880">
    <property type="entry name" value="PGM_PMM_III"/>
    <property type="match status" value="1"/>
</dbReference>
<dbReference type="Pfam" id="PF00408">
    <property type="entry name" value="PGM_PMM_IV"/>
    <property type="match status" value="1"/>
</dbReference>
<dbReference type="PRINTS" id="PR00509">
    <property type="entry name" value="PGMPMM"/>
</dbReference>
<dbReference type="SUPFAM" id="SSF55957">
    <property type="entry name" value="Phosphoglucomutase, C-terminal domain"/>
    <property type="match status" value="1"/>
</dbReference>
<dbReference type="SUPFAM" id="SSF53738">
    <property type="entry name" value="Phosphoglucomutase, first 3 domains"/>
    <property type="match status" value="3"/>
</dbReference>
<dbReference type="PROSITE" id="PS00710">
    <property type="entry name" value="PGM_PMM"/>
    <property type="match status" value="1"/>
</dbReference>
<gene>
    <name evidence="1" type="primary">glmM</name>
    <name type="synonym">ybbT</name>
    <name type="ordered locus">BSU01770</name>
</gene>
<accession>O34824</accession>
<accession>O87090</accession>